<feature type="chain" id="PRO_0000190235" description="Inositol polyphosphate 4-phosphatase type II">
    <location>
        <begin position="1"/>
        <end position="924"/>
    </location>
</feature>
<feature type="domain" description="C2" evidence="2">
    <location>
        <begin position="23"/>
        <end position="165"/>
    </location>
</feature>
<feature type="region of interest" description="Disordered" evidence="3">
    <location>
        <begin position="1"/>
        <end position="24"/>
    </location>
</feature>
<feature type="region of interest" description="Disordered" evidence="3">
    <location>
        <begin position="481"/>
        <end position="516"/>
    </location>
</feature>
<feature type="region of interest" description="Disordered" evidence="3">
    <location>
        <begin position="546"/>
        <end position="570"/>
    </location>
</feature>
<feature type="compositionally biased region" description="Basic and acidic residues" evidence="3">
    <location>
        <begin position="1"/>
        <end position="13"/>
    </location>
</feature>
<feature type="splice variant" id="VSP_047696" description="In isoform 2." evidence="8">
    <original>VRTSVLP</original>
    <variation>IANSSRI</variation>
    <location>
        <begin position="125"/>
        <end position="131"/>
    </location>
</feature>
<feature type="splice variant" id="VSP_047697" description="In isoform 2." evidence="8">
    <location>
        <begin position="132"/>
        <end position="924"/>
    </location>
</feature>
<feature type="sequence variant" id="VAR_023324" description="In dbSNP:rs1064226." evidence="7">
    <original>Y</original>
    <variation>F</variation>
    <location>
        <position position="311"/>
    </location>
</feature>
<feature type="mutagenesis site" description="Abolished phosphotyrosine phosphatase activity." evidence="5">
    <original>C</original>
    <variation>S</variation>
    <location>
        <position position="842"/>
    </location>
</feature>
<feature type="mutagenesis site" description="Increased phosphotyrosine phosphatase activity. Does not alter lipid phosphatase activity for the substrate phosphatidylinositol(3,4)P2, but reduced hydrolysis of inositol(1,3,4)P3 by about 70%." evidence="5">
    <original>K</original>
    <variation>M</variation>
    <location>
        <position position="843"/>
    </location>
</feature>
<feature type="mutagenesis site" description="Does not alter phosphotyrosine phosphatase activity. Abolished lipid phosphatase activity." evidence="5">
    <original>K</original>
    <variation>M</variation>
    <location>
        <position position="846"/>
    </location>
</feature>
<feature type="mutagenesis site" description="Significantly reduces phosphotyrosine phosphatase activity. Not able to dephosphorylate phosphatidylinositol(3,4)P2 but retains approximately 35% of activity towards Inosotol(1,3,4)P3." evidence="5">
    <original>D</original>
    <variation>E</variation>
    <location>
        <position position="847"/>
    </location>
</feature>
<feature type="sequence conflict" description="In Ref. 1; AAB72153." evidence="9" ref="1">
    <original>S</original>
    <variation>A</variation>
    <location>
        <position position="319"/>
    </location>
</feature>
<feature type="sequence conflict" description="In Ref. 1; AAB72153." evidence="9" ref="1">
    <original>A</original>
    <variation>P</variation>
    <location>
        <position position="683"/>
    </location>
</feature>
<keyword id="KW-0025">Alternative splicing</keyword>
<keyword id="KW-0378">Hydrolase</keyword>
<keyword id="KW-0443">Lipid metabolism</keyword>
<keyword id="KW-1267">Proteomics identification</keyword>
<keyword id="KW-1185">Reference proteome</keyword>
<accession>O15327</accession>
<accession>Q2TAI2</accession>
<accession>Q5XLE7</accession>
<accession>Q6IN59</accession>
<accession>Q6PJB4</accession>
<name>INP4B_HUMAN</name>
<protein>
    <recommendedName>
        <fullName>Inositol polyphosphate 4-phosphatase type II</fullName>
    </recommendedName>
    <alternativeName>
        <fullName>Type II inositol 3,4-bisphosphate 4-phosphatase</fullName>
        <ecNumber evidence="6">3.1.3.66</ecNumber>
    </alternativeName>
</protein>
<proteinExistence type="evidence at protein level"/>
<sequence>MEIKEEGASEEGQHFLPTAQANDPGDCQFTSIQKTPNEPQLEFILACKDLVAPVRDRKLNTLVQISVIHPVEQSLTRYSSTEIVEGTRDPLFLTGVTFPSEYPIYEETKIKLTVYDVKDKSHDTVRTSVLPEHKDPPPEVGRSFLGYASFKVGELLKSKEQLLVLSLRTSDGGKVVGTIEVSVVKMGEIEDGEADHITTDVQGQKCALVCECTAPESVSGKDNLPFLNSVLKNPVCKLYRFPTSDNKWMRIREQMSESILSFHIPKELISLHIKEDLCRNQEIKELGELSPHWDNLRKNVLTHCDQMVNMYQDILTELSKETGSSFKSSSSKGEKTLEFVPINLHLQRMQVHSPHLKDALYDVITVGAPAAHFQGFKNGGLRKLLHRFETERRNTGYQFIYYSPENTAKAKEVLSNINQLQPLIATHADLLLNSASQHSPDSLKNSLKMLSEKTELFVHAFKDQLVRSALLALYTARPGGILKKPPSPKSSTEESSPQDQPPVMRGQDSIPHHSDYDEEEWDRVWANVGKSLNCIIAMVDKLIERDGGSEGSGGNNDGEKEPSLTDAIPSHPREDWYEQLYPLILTLKDCMGEVVNRAKQSLTFVLLQELAYSLPQCLMLTLRRDIVFSQALAGLVCGFIIKLQTSLYDPGFLQQLHTVGLIVQYEGLLSTYSDEIGMLEDMAVGISDLKKVAFKIIEAKSNDVLPVITGRREHYVVEVKLPARMFESLPLQIKEGQLLHVYPVLFNVGINEQQTLAERFGDVSLQESINQENFELLQEYYKIFMEKMPPDYISHFQEQNDLKALLENLLQNIQSKKRKNVEIMWLAATICRKLNGIRFTCCKSAKDRTSMSVTLEQCSILRDEHQLHKDFFIRALDCMRREGCRIENVLKNIKCRKYAFNMLQLMAFPKYYRPPEGTYGKADT</sequence>
<reference key="1">
    <citation type="journal article" date="1997" name="J. Biol. Chem.">
        <title>The cDNA cloning and characterization of inositol polyphosphate 4-phosphatase type II. Evidence for conserved alternative splicing in the 4-phosphatase family.</title>
        <authorList>
            <person name="Norris F.A."/>
            <person name="Atkins R.C."/>
            <person name="Majerus P.W."/>
        </authorList>
    </citation>
    <scope>NUCLEOTIDE SEQUENCE [MRNA] (ISOFORM 1)</scope>
    <scope>TISSUE SPECIFICITY</scope>
    <scope>VARIANT PHE-311</scope>
    <source>
        <tissue>Brain</tissue>
    </source>
</reference>
<reference key="2">
    <citation type="submission" date="2004-09" db="EMBL/GenBank/DDBJ databases">
        <title>Characterization of stubby: a natural C2 domain containing spliceoform of type II inositol polyphosphate 4-phosphatases.</title>
        <authorList>
            <person name="Shearn C.T."/>
            <person name="Joseph R.E."/>
            <person name="Norris F.A."/>
        </authorList>
    </citation>
    <scope>NUCLEOTIDE SEQUENCE [MRNA] (ISOFORM 2)</scope>
    <source>
        <tissue>Testis</tissue>
    </source>
</reference>
<reference key="3">
    <citation type="journal article" date="2005" name="Nature">
        <title>Generation and annotation of the DNA sequences of human chromosomes 2 and 4.</title>
        <authorList>
            <person name="Hillier L.W."/>
            <person name="Graves T.A."/>
            <person name="Fulton R.S."/>
            <person name="Fulton L.A."/>
            <person name="Pepin K.H."/>
            <person name="Minx P."/>
            <person name="Wagner-McPherson C."/>
            <person name="Layman D."/>
            <person name="Wylie K."/>
            <person name="Sekhon M."/>
            <person name="Becker M.C."/>
            <person name="Fewell G.A."/>
            <person name="Delehaunty K.D."/>
            <person name="Miner T.L."/>
            <person name="Nash W.E."/>
            <person name="Kremitzki C."/>
            <person name="Oddy L."/>
            <person name="Du H."/>
            <person name="Sun H."/>
            <person name="Bradshaw-Cordum H."/>
            <person name="Ali J."/>
            <person name="Carter J."/>
            <person name="Cordes M."/>
            <person name="Harris A."/>
            <person name="Isak A."/>
            <person name="van Brunt A."/>
            <person name="Nguyen C."/>
            <person name="Du F."/>
            <person name="Courtney L."/>
            <person name="Kalicki J."/>
            <person name="Ozersky P."/>
            <person name="Abbott S."/>
            <person name="Armstrong J."/>
            <person name="Belter E.A."/>
            <person name="Caruso L."/>
            <person name="Cedroni M."/>
            <person name="Cotton M."/>
            <person name="Davidson T."/>
            <person name="Desai A."/>
            <person name="Elliott G."/>
            <person name="Erb T."/>
            <person name="Fronick C."/>
            <person name="Gaige T."/>
            <person name="Haakenson W."/>
            <person name="Haglund K."/>
            <person name="Holmes A."/>
            <person name="Harkins R."/>
            <person name="Kim K."/>
            <person name="Kruchowski S.S."/>
            <person name="Strong C.M."/>
            <person name="Grewal N."/>
            <person name="Goyea E."/>
            <person name="Hou S."/>
            <person name="Levy A."/>
            <person name="Martinka S."/>
            <person name="Mead K."/>
            <person name="McLellan M.D."/>
            <person name="Meyer R."/>
            <person name="Randall-Maher J."/>
            <person name="Tomlinson C."/>
            <person name="Dauphin-Kohlberg S."/>
            <person name="Kozlowicz-Reilly A."/>
            <person name="Shah N."/>
            <person name="Swearengen-Shahid S."/>
            <person name="Snider J."/>
            <person name="Strong J.T."/>
            <person name="Thompson J."/>
            <person name="Yoakum M."/>
            <person name="Leonard S."/>
            <person name="Pearman C."/>
            <person name="Trani L."/>
            <person name="Radionenko M."/>
            <person name="Waligorski J.E."/>
            <person name="Wang C."/>
            <person name="Rock S.M."/>
            <person name="Tin-Wollam A.-M."/>
            <person name="Maupin R."/>
            <person name="Latreille P."/>
            <person name="Wendl M.C."/>
            <person name="Yang S.-P."/>
            <person name="Pohl C."/>
            <person name="Wallis J.W."/>
            <person name="Spieth J."/>
            <person name="Bieri T.A."/>
            <person name="Berkowicz N."/>
            <person name="Nelson J.O."/>
            <person name="Osborne J."/>
            <person name="Ding L."/>
            <person name="Meyer R."/>
            <person name="Sabo A."/>
            <person name="Shotland Y."/>
            <person name="Sinha P."/>
            <person name="Wohldmann P.E."/>
            <person name="Cook L.L."/>
            <person name="Hickenbotham M.T."/>
            <person name="Eldred J."/>
            <person name="Williams D."/>
            <person name="Jones T.A."/>
            <person name="She X."/>
            <person name="Ciccarelli F.D."/>
            <person name="Izaurralde E."/>
            <person name="Taylor J."/>
            <person name="Schmutz J."/>
            <person name="Myers R.M."/>
            <person name="Cox D.R."/>
            <person name="Huang X."/>
            <person name="McPherson J.D."/>
            <person name="Mardis E.R."/>
            <person name="Clifton S.W."/>
            <person name="Warren W.C."/>
            <person name="Chinwalla A.T."/>
            <person name="Eddy S.R."/>
            <person name="Marra M.A."/>
            <person name="Ovcharenko I."/>
            <person name="Furey T.S."/>
            <person name="Miller W."/>
            <person name="Eichler E.E."/>
            <person name="Bork P."/>
            <person name="Suyama M."/>
            <person name="Torrents D."/>
            <person name="Waterston R.H."/>
            <person name="Wilson R.K."/>
        </authorList>
    </citation>
    <scope>NUCLEOTIDE SEQUENCE [LARGE SCALE GENOMIC DNA]</scope>
</reference>
<reference key="4">
    <citation type="submission" date="2005-09" db="EMBL/GenBank/DDBJ databases">
        <authorList>
            <person name="Mural R.J."/>
            <person name="Istrail S."/>
            <person name="Sutton G.G."/>
            <person name="Florea L."/>
            <person name="Halpern A.L."/>
            <person name="Mobarry C.M."/>
            <person name="Lippert R."/>
            <person name="Walenz B."/>
            <person name="Shatkay H."/>
            <person name="Dew I."/>
            <person name="Miller J.R."/>
            <person name="Flanigan M.J."/>
            <person name="Edwards N.J."/>
            <person name="Bolanos R."/>
            <person name="Fasulo D."/>
            <person name="Halldorsson B.V."/>
            <person name="Hannenhalli S."/>
            <person name="Turner R."/>
            <person name="Yooseph S."/>
            <person name="Lu F."/>
            <person name="Nusskern D.R."/>
            <person name="Shue B.C."/>
            <person name="Zheng X.H."/>
            <person name="Zhong F."/>
            <person name="Delcher A.L."/>
            <person name="Huson D.H."/>
            <person name="Kravitz S.A."/>
            <person name="Mouchard L."/>
            <person name="Reinert K."/>
            <person name="Remington K.A."/>
            <person name="Clark A.G."/>
            <person name="Waterman M.S."/>
            <person name="Eichler E.E."/>
            <person name="Adams M.D."/>
            <person name="Hunkapiller M.W."/>
            <person name="Myers E.W."/>
            <person name="Venter J.C."/>
        </authorList>
    </citation>
    <scope>NUCLEOTIDE SEQUENCE [LARGE SCALE GENOMIC DNA]</scope>
</reference>
<reference key="5">
    <citation type="journal article" date="2004" name="Genome Res.">
        <title>The status, quality, and expansion of the NIH full-length cDNA project: the Mammalian Gene Collection (MGC).</title>
        <authorList>
            <consortium name="The MGC Project Team"/>
        </authorList>
    </citation>
    <scope>NUCLEOTIDE SEQUENCE [LARGE SCALE MRNA] (ISOFORM 1)</scope>
    <source>
        <tissue>Prostate</tissue>
        <tissue>Skin</tissue>
    </source>
</reference>
<reference key="6">
    <citation type="journal article" date="2009" name="Cancer Cell">
        <title>Evidence that inositol polyphosphate 4-phosphatase type II is a tumor suppressor that inhibits PI3K signaling.</title>
        <authorList>
            <person name="Gewinner C."/>
            <person name="Wang Z.C."/>
            <person name="Richardson A."/>
            <person name="Teruya-Feldstein J."/>
            <person name="Etemadmoghadam D."/>
            <person name="Bowtell D."/>
            <person name="Barretina J."/>
            <person name="Lin W.M."/>
            <person name="Rameh L."/>
            <person name="Salmena L."/>
            <person name="Pandolfi P.P."/>
            <person name="Cantley L.C."/>
        </authorList>
    </citation>
    <scope>FUNCTION</scope>
</reference>
<reference key="7">
    <citation type="journal article" date="2013" name="Biochem. Biophys. Res. Commun.">
        <title>Determinants of the tumor suppressor INPP4B protein and lipid phosphatase activities.</title>
        <authorList>
            <person name="Lopez S.M."/>
            <person name="Hodgson M.C."/>
            <person name="Packianathan C."/>
            <person name="Bingol-Ozakpinar O."/>
            <person name="Uras F."/>
            <person name="Rosen B.P."/>
            <person name="Agoulnik I.U."/>
        </authorList>
    </citation>
    <scope>CATALYTIC ACTIVITY</scope>
    <scope>FUNCTION</scope>
    <scope>MUTAGENESIS OF CYS-842; LYS-843; LYS-846 AND ASP-847</scope>
</reference>
<reference key="8">
    <citation type="journal article" date="2014" name="Proc. Natl. Acad. Sci. U.S.A.">
        <title>Sequential breakdown of 3-phosphorylated phosphoinositides is essential for the completion of macropinocytosis.</title>
        <authorList>
            <person name="Maekawa M."/>
            <person name="Terasaka S."/>
            <person name="Mochizuki Y."/>
            <person name="Kawai K."/>
            <person name="Ikeda Y."/>
            <person name="Araki N."/>
            <person name="Skolnik E.Y."/>
            <person name="Taguchi T."/>
            <person name="Arai H."/>
        </authorList>
    </citation>
    <scope>FUNCTION</scope>
    <scope>CATALYTIC ACTIVITY</scope>
</reference>
<gene>
    <name type="primary">INPP4B</name>
</gene>
<evidence type="ECO:0000250" key="1">
    <source>
        <dbReference type="UniProtKB" id="Q9QWG5"/>
    </source>
</evidence>
<evidence type="ECO:0000255" key="2">
    <source>
        <dbReference type="PROSITE-ProRule" id="PRU00041"/>
    </source>
</evidence>
<evidence type="ECO:0000256" key="3">
    <source>
        <dbReference type="SAM" id="MobiDB-lite"/>
    </source>
</evidence>
<evidence type="ECO:0000269" key="4">
    <source>
    </source>
</evidence>
<evidence type="ECO:0000269" key="5">
    <source>
    </source>
</evidence>
<evidence type="ECO:0000269" key="6">
    <source>
    </source>
</evidence>
<evidence type="ECO:0000269" key="7">
    <source>
    </source>
</evidence>
<evidence type="ECO:0000303" key="8">
    <source ref="2"/>
</evidence>
<evidence type="ECO:0000305" key="9"/>
<evidence type="ECO:0000305" key="10">
    <source>
    </source>
</evidence>
<evidence type="ECO:0000305" key="11">
    <source>
    </source>
</evidence>
<organism>
    <name type="scientific">Homo sapiens</name>
    <name type="common">Human</name>
    <dbReference type="NCBI Taxonomy" id="9606"/>
    <lineage>
        <taxon>Eukaryota</taxon>
        <taxon>Metazoa</taxon>
        <taxon>Chordata</taxon>
        <taxon>Craniata</taxon>
        <taxon>Vertebrata</taxon>
        <taxon>Euteleostomi</taxon>
        <taxon>Mammalia</taxon>
        <taxon>Eutheria</taxon>
        <taxon>Euarchontoglires</taxon>
        <taxon>Primates</taxon>
        <taxon>Haplorrhini</taxon>
        <taxon>Catarrhini</taxon>
        <taxon>Hominidae</taxon>
        <taxon>Homo</taxon>
    </lineage>
</organism>
<dbReference type="EC" id="3.1.3.66" evidence="6"/>
<dbReference type="EMBL" id="U96922">
    <property type="protein sequence ID" value="AAB72153.1"/>
    <property type="molecule type" value="mRNA"/>
</dbReference>
<dbReference type="EMBL" id="AY753912">
    <property type="protein sequence ID" value="AAV28485.1"/>
    <property type="molecule type" value="mRNA"/>
</dbReference>
<dbReference type="EMBL" id="AC093860">
    <property type="status" value="NOT_ANNOTATED_CDS"/>
    <property type="molecule type" value="Genomic_DNA"/>
</dbReference>
<dbReference type="EMBL" id="AC093885">
    <property type="status" value="NOT_ANNOTATED_CDS"/>
    <property type="molecule type" value="Genomic_DNA"/>
</dbReference>
<dbReference type="EMBL" id="AC108060">
    <property type="status" value="NOT_ANNOTATED_CDS"/>
    <property type="molecule type" value="Genomic_DNA"/>
</dbReference>
<dbReference type="EMBL" id="AC108077">
    <property type="status" value="NOT_ANNOTATED_CDS"/>
    <property type="molecule type" value="Genomic_DNA"/>
</dbReference>
<dbReference type="EMBL" id="AC138657">
    <property type="status" value="NOT_ANNOTATED_CDS"/>
    <property type="molecule type" value="Genomic_DNA"/>
</dbReference>
<dbReference type="EMBL" id="AC139720">
    <property type="status" value="NOT_ANNOTATED_CDS"/>
    <property type="molecule type" value="Genomic_DNA"/>
</dbReference>
<dbReference type="EMBL" id="CH471056">
    <property type="protein sequence ID" value="EAX05081.1"/>
    <property type="molecule type" value="Genomic_DNA"/>
</dbReference>
<dbReference type="EMBL" id="BC017924">
    <property type="protein sequence ID" value="AAH17924.1"/>
    <property type="molecule type" value="mRNA"/>
</dbReference>
<dbReference type="EMBL" id="BC072447">
    <property type="protein sequence ID" value="AAH72447.1"/>
    <property type="status" value="ALT_SEQ"/>
    <property type="molecule type" value="mRNA"/>
</dbReference>
<dbReference type="EMBL" id="BC110918">
    <property type="protein sequence ID" value="AAI10919.1"/>
    <property type="molecule type" value="mRNA"/>
</dbReference>
<dbReference type="EMBL" id="BC133005">
    <property type="protein sequence ID" value="AAI33006.1"/>
    <property type="molecule type" value="mRNA"/>
</dbReference>
<dbReference type="CCDS" id="CCDS3757.1">
    <molecule id="O15327-1"/>
</dbReference>
<dbReference type="RefSeq" id="NP_001095139.1">
    <molecule id="O15327-1"/>
    <property type="nucleotide sequence ID" value="NM_001101669.3"/>
</dbReference>
<dbReference type="RefSeq" id="NP_001317969.1">
    <property type="nucleotide sequence ID" value="NM_001331040.1"/>
</dbReference>
<dbReference type="RefSeq" id="NP_001372263.1">
    <molecule id="O15327-1"/>
    <property type="nucleotide sequence ID" value="NM_001385334.1"/>
</dbReference>
<dbReference type="RefSeq" id="NP_001372265.1">
    <molecule id="O15327-1"/>
    <property type="nucleotide sequence ID" value="NM_001385336.1"/>
</dbReference>
<dbReference type="RefSeq" id="NP_001372267.1">
    <molecule id="O15327-1"/>
    <property type="nucleotide sequence ID" value="NM_001385338.1"/>
</dbReference>
<dbReference type="RefSeq" id="NP_001372270.1">
    <molecule id="O15327-1"/>
    <property type="nucleotide sequence ID" value="NM_001385341.1"/>
</dbReference>
<dbReference type="RefSeq" id="NP_001372271.1">
    <molecule id="O15327-1"/>
    <property type="nucleotide sequence ID" value="NM_001385342.1"/>
</dbReference>
<dbReference type="RefSeq" id="NP_001372273.1">
    <molecule id="O15327-1"/>
    <property type="nucleotide sequence ID" value="NM_001385344.1"/>
</dbReference>
<dbReference type="RefSeq" id="NP_003857.2">
    <molecule id="O15327-1"/>
    <property type="nucleotide sequence ID" value="NM_003866.3"/>
</dbReference>
<dbReference type="RefSeq" id="XP_047272312.1">
    <molecule id="O15327-1"/>
    <property type="nucleotide sequence ID" value="XM_047416356.1"/>
</dbReference>
<dbReference type="RefSeq" id="XP_047272313.1">
    <molecule id="O15327-1"/>
    <property type="nucleotide sequence ID" value="XM_047416357.1"/>
</dbReference>
<dbReference type="RefSeq" id="XP_047272314.1">
    <molecule id="O15327-1"/>
    <property type="nucleotide sequence ID" value="XM_047416358.1"/>
</dbReference>
<dbReference type="RefSeq" id="XP_047272315.1">
    <molecule id="O15327-1"/>
    <property type="nucleotide sequence ID" value="XM_047416359.1"/>
</dbReference>
<dbReference type="SMR" id="O15327"/>
<dbReference type="BioGRID" id="114348">
    <property type="interactions" value="27"/>
</dbReference>
<dbReference type="FunCoup" id="O15327">
    <property type="interactions" value="1383"/>
</dbReference>
<dbReference type="IntAct" id="O15327">
    <property type="interactions" value="3"/>
</dbReference>
<dbReference type="STRING" id="9606.ENSP00000422793"/>
<dbReference type="SwissLipids" id="SLP:000000898"/>
<dbReference type="DEPOD" id="INPP4B"/>
<dbReference type="GlyGen" id="O15327">
    <property type="glycosylation" value="1 site, 1 O-linked glycan (1 site)"/>
</dbReference>
<dbReference type="iPTMnet" id="O15327"/>
<dbReference type="PhosphoSitePlus" id="O15327"/>
<dbReference type="BioMuta" id="INPP4B"/>
<dbReference type="jPOST" id="O15327"/>
<dbReference type="MassIVE" id="O15327"/>
<dbReference type="PaxDb" id="9606-ENSP00000425487"/>
<dbReference type="PeptideAtlas" id="O15327"/>
<dbReference type="ProteomicsDB" id="48591">
    <molecule id="O15327-1"/>
</dbReference>
<dbReference type="ProteomicsDB" id="65839"/>
<dbReference type="Pumba" id="O15327"/>
<dbReference type="ABCD" id="O15327">
    <property type="antibodies" value="1 sequenced antibody"/>
</dbReference>
<dbReference type="Antibodypedia" id="27309">
    <property type="antibodies" value="135 antibodies from 28 providers"/>
</dbReference>
<dbReference type="DNASU" id="8821"/>
<dbReference type="Ensembl" id="ENST00000262992.9">
    <molecule id="O15327-1"/>
    <property type="protein sequence ID" value="ENSP00000262992.4"/>
    <property type="gene ID" value="ENSG00000109452.13"/>
</dbReference>
<dbReference type="Ensembl" id="ENST00000506217.5">
    <molecule id="O15327-2"/>
    <property type="protein sequence ID" value="ENSP00000424057.1"/>
    <property type="gene ID" value="ENSG00000109452.13"/>
</dbReference>
<dbReference type="Ensembl" id="ENST00000508116.5">
    <molecule id="O15327-1"/>
    <property type="protein sequence ID" value="ENSP00000423954.1"/>
    <property type="gene ID" value="ENSG00000109452.13"/>
</dbReference>
<dbReference type="Ensembl" id="ENST00000513000.5">
    <molecule id="O15327-1"/>
    <property type="protein sequence ID" value="ENSP00000425487.1"/>
    <property type="gene ID" value="ENSG00000109452.13"/>
</dbReference>
<dbReference type="GeneID" id="8821"/>
<dbReference type="KEGG" id="hsa:8821"/>
<dbReference type="MANE-Select" id="ENST00000262992.9">
    <property type="protein sequence ID" value="ENSP00000262992.4"/>
    <property type="RefSeq nucleotide sequence ID" value="NM_001101669.3"/>
    <property type="RefSeq protein sequence ID" value="NP_001095139.1"/>
</dbReference>
<dbReference type="UCSC" id="uc003iix.5">
    <molecule id="O15327-1"/>
    <property type="organism name" value="human"/>
</dbReference>
<dbReference type="AGR" id="HGNC:6075"/>
<dbReference type="CTD" id="8821"/>
<dbReference type="DisGeNET" id="8821"/>
<dbReference type="GeneCards" id="INPP4B"/>
<dbReference type="HGNC" id="HGNC:6075">
    <property type="gene designation" value="INPP4B"/>
</dbReference>
<dbReference type="HPA" id="ENSG00000109452">
    <property type="expression patterns" value="Low tissue specificity"/>
</dbReference>
<dbReference type="MalaCards" id="INPP4B"/>
<dbReference type="MIM" id="607494">
    <property type="type" value="gene"/>
</dbReference>
<dbReference type="neXtProt" id="NX_O15327"/>
<dbReference type="OpenTargets" id="ENSG00000109452"/>
<dbReference type="PharmGKB" id="PA29883"/>
<dbReference type="VEuPathDB" id="HostDB:ENSG00000109452"/>
<dbReference type="eggNOG" id="KOG4428">
    <property type="taxonomic scope" value="Eukaryota"/>
</dbReference>
<dbReference type="GeneTree" id="ENSGT00940000157587"/>
<dbReference type="HOGENOM" id="CLU_007802_1_0_1"/>
<dbReference type="InParanoid" id="O15327"/>
<dbReference type="OrthoDB" id="159395at2759"/>
<dbReference type="PAN-GO" id="O15327">
    <property type="GO annotations" value="2 GO annotations based on evolutionary models"/>
</dbReference>
<dbReference type="PhylomeDB" id="O15327"/>
<dbReference type="TreeFam" id="TF325637"/>
<dbReference type="BioCyc" id="MetaCyc:HS03227-MONOMER"/>
<dbReference type="BRENDA" id="3.1.3.66">
    <property type="organism ID" value="2681"/>
</dbReference>
<dbReference type="PathwayCommons" id="O15327"/>
<dbReference type="Reactome" id="R-HSA-1660499">
    <property type="pathway name" value="Synthesis of PIPs at the plasma membrane"/>
</dbReference>
<dbReference type="Reactome" id="R-HSA-1660516">
    <property type="pathway name" value="Synthesis of PIPs at the early endosome membrane"/>
</dbReference>
<dbReference type="Reactome" id="R-HSA-1855183">
    <property type="pathway name" value="Synthesis of IP2, IP, and Ins in the cytosol"/>
</dbReference>
<dbReference type="SignaLink" id="O15327"/>
<dbReference type="SIGNOR" id="O15327"/>
<dbReference type="UniPathway" id="UPA00944"/>
<dbReference type="BioGRID-ORCS" id="8821">
    <property type="hits" value="13 hits in 1171 CRISPR screens"/>
</dbReference>
<dbReference type="ChiTaRS" id="INPP4B">
    <property type="organism name" value="human"/>
</dbReference>
<dbReference type="GeneWiki" id="INPP4B"/>
<dbReference type="GenomeRNAi" id="8821"/>
<dbReference type="Pharos" id="O15327">
    <property type="development level" value="Tbio"/>
</dbReference>
<dbReference type="PRO" id="PR:O15327"/>
<dbReference type="Proteomes" id="UP000005640">
    <property type="component" value="Chromosome 4"/>
</dbReference>
<dbReference type="RNAct" id="O15327">
    <property type="molecule type" value="protein"/>
</dbReference>
<dbReference type="Bgee" id="ENSG00000109452">
    <property type="expression patterns" value="Expressed in sperm and 171 other cell types or tissues"/>
</dbReference>
<dbReference type="ExpressionAtlas" id="O15327">
    <property type="expression patterns" value="baseline and differential"/>
</dbReference>
<dbReference type="GO" id="GO:0005737">
    <property type="term" value="C:cytoplasm"/>
    <property type="evidence" value="ECO:0000318"/>
    <property type="project" value="GO_Central"/>
</dbReference>
<dbReference type="GO" id="GO:0005829">
    <property type="term" value="C:cytosol"/>
    <property type="evidence" value="ECO:0000304"/>
    <property type="project" value="Reactome"/>
</dbReference>
<dbReference type="GO" id="GO:0017161">
    <property type="term" value="F:inositol-1,3,4-trisphosphate 4-phosphatase activity"/>
    <property type="evidence" value="ECO:0000304"/>
    <property type="project" value="Reactome"/>
</dbReference>
<dbReference type="GO" id="GO:0052828">
    <property type="term" value="F:inositol-3,4-bisphosphate 4-phosphatase activity"/>
    <property type="evidence" value="ECO:0000304"/>
    <property type="project" value="Reactome"/>
</dbReference>
<dbReference type="GO" id="GO:0016316">
    <property type="term" value="F:phosphatidylinositol-3,4-bisphosphate 4-phosphatase activity"/>
    <property type="evidence" value="ECO:0000318"/>
    <property type="project" value="GO_Central"/>
</dbReference>
<dbReference type="GO" id="GO:0043647">
    <property type="term" value="P:inositol phosphate metabolic process"/>
    <property type="evidence" value="ECO:0000304"/>
    <property type="project" value="Reactome"/>
</dbReference>
<dbReference type="GO" id="GO:0006661">
    <property type="term" value="P:phosphatidylinositol biosynthetic process"/>
    <property type="evidence" value="ECO:0000304"/>
    <property type="project" value="Reactome"/>
</dbReference>
<dbReference type="GO" id="GO:0007165">
    <property type="term" value="P:signal transduction"/>
    <property type="evidence" value="ECO:0000304"/>
    <property type="project" value="ProtInc"/>
</dbReference>
<dbReference type="CDD" id="cd04048">
    <property type="entry name" value="C2A_Copine"/>
    <property type="match status" value="1"/>
</dbReference>
<dbReference type="FunFam" id="2.60.40.150:FF:000143">
    <property type="entry name" value="Type II inositol 3,4-bisphosphate 4-phosphatase"/>
    <property type="match status" value="1"/>
</dbReference>
<dbReference type="Gene3D" id="6.10.250.230">
    <property type="match status" value="1"/>
</dbReference>
<dbReference type="Gene3D" id="2.60.40.150">
    <property type="entry name" value="C2 domain"/>
    <property type="match status" value="1"/>
</dbReference>
<dbReference type="InterPro" id="IPR000008">
    <property type="entry name" value="C2_dom"/>
</dbReference>
<dbReference type="InterPro" id="IPR035892">
    <property type="entry name" value="C2_domain_sf"/>
</dbReference>
<dbReference type="InterPro" id="IPR039034">
    <property type="entry name" value="INPP4"/>
</dbReference>
<dbReference type="PANTHER" id="PTHR12187">
    <property type="entry name" value="AGAP000124-PA"/>
    <property type="match status" value="1"/>
</dbReference>
<dbReference type="PANTHER" id="PTHR12187:SF3">
    <property type="entry name" value="INOSITOL POLYPHOSPHATE 4-PHOSPHATASE TYPE II"/>
    <property type="match status" value="1"/>
</dbReference>
<dbReference type="SUPFAM" id="SSF49562">
    <property type="entry name" value="C2 domain (Calcium/lipid-binding domain, CaLB)"/>
    <property type="match status" value="1"/>
</dbReference>
<dbReference type="PROSITE" id="PS50004">
    <property type="entry name" value="C2"/>
    <property type="match status" value="1"/>
</dbReference>
<comment type="function">
    <text evidence="4 5 6">Catalyzes the hydrolysis of the 4-position phosphate of phosphatidylinositol 3,4-bisphosphate, inositol 1,3,4-trisphosphate and inositol 3,4-trisphosphate (PubMed:24070612, PubMed:24591580). Plays a role in the late stages of macropinocytosis by dephosphorylating phosphatidylinositol 3,4-bisphosphate in membrane ruffles (PubMed:24591580). The lipid phosphatase activity is critical for tumor suppressor function. Antagonizes the PI3K-AKT/PKB signaling pathway by dephosphorylating phosphoinositides and thereby modulating cell cycle progression and cell survival (PubMed:19647222, PubMed:24070612).</text>
</comment>
<comment type="catalytic activity">
    <reaction evidence="4 5 11">
        <text>a 1,2-diacyl-sn-glycero-3-phospho-(1D-myo-inositol-3,4-bisphosphate) + H2O = a 1,2-diacyl-sn-glycero-3-phospho-(1D-myo-inositol-3-phosphate) + phosphate</text>
        <dbReference type="Rhea" id="RHEA:17193"/>
        <dbReference type="ChEBI" id="CHEBI:15377"/>
        <dbReference type="ChEBI" id="CHEBI:43474"/>
        <dbReference type="ChEBI" id="CHEBI:57658"/>
        <dbReference type="ChEBI" id="CHEBI:58088"/>
        <dbReference type="EC" id="3.1.3.66"/>
    </reaction>
    <physiologicalReaction direction="left-to-right" evidence="10">
        <dbReference type="Rhea" id="RHEA:17194"/>
    </physiologicalReaction>
</comment>
<comment type="catalytic activity">
    <reaction evidence="5">
        <text>1D-myo-inositol 1,3,4-trisphosphate + H2O = 1D-myo-inositol 1,3-bisphosphate + phosphate</text>
        <dbReference type="Rhea" id="RHEA:43392"/>
        <dbReference type="ChEBI" id="CHEBI:15377"/>
        <dbReference type="ChEBI" id="CHEBI:43474"/>
        <dbReference type="ChEBI" id="CHEBI:58414"/>
        <dbReference type="ChEBI" id="CHEBI:83242"/>
    </reaction>
    <physiologicalReaction direction="left-to-right" evidence="10">
        <dbReference type="Rhea" id="RHEA:43393"/>
    </physiologicalReaction>
</comment>
<comment type="catalytic activity">
    <reaction evidence="1">
        <text>1D-myo-inositol 3,4-bisphosphate + H2O = 1D-myo-inositol 3-phosphate + phosphate</text>
        <dbReference type="Rhea" id="RHEA:43388"/>
        <dbReference type="ChEBI" id="CHEBI:15377"/>
        <dbReference type="ChEBI" id="CHEBI:43474"/>
        <dbReference type="ChEBI" id="CHEBI:58401"/>
        <dbReference type="ChEBI" id="CHEBI:83241"/>
    </reaction>
</comment>
<comment type="activity regulation">
    <text evidence="1">Strongly inhibited by inositol hexakisphosphate.</text>
</comment>
<comment type="pathway">
    <text evidence="1">Signal transduction; phosphatidylinositol signaling pathway.</text>
</comment>
<comment type="alternative products">
    <event type="alternative splicing"/>
    <isoform>
        <id>O15327-1</id>
        <name>1</name>
        <sequence type="displayed"/>
    </isoform>
    <isoform>
        <id>O15327-2</id>
        <name>2</name>
        <name>stubby</name>
        <sequence type="described" ref="VSP_047696 VSP_047697"/>
    </isoform>
</comment>
<comment type="tissue specificity">
    <text evidence="7">Widely expressed with highest levels occurring in the skeletal muscle and heart.</text>
</comment>
<comment type="similarity">
    <text evidence="9">Belongs to the inositol 3,4-bisphosphate 4-phosphatase family.</text>
</comment>
<comment type="sequence caution" evidence="9">
    <conflict type="miscellaneous discrepancy">
        <sequence resource="EMBL-CDS" id="AAH72447"/>
    </conflict>
    <text>Contaminating sequence. Potential poly-A sequence.</text>
</comment>